<comment type="catalytic activity">
    <reaction evidence="1">
        <text>L-citrulline + L-aspartate + ATP = 2-(N(omega)-L-arginino)succinate + AMP + diphosphate + H(+)</text>
        <dbReference type="Rhea" id="RHEA:10932"/>
        <dbReference type="ChEBI" id="CHEBI:15378"/>
        <dbReference type="ChEBI" id="CHEBI:29991"/>
        <dbReference type="ChEBI" id="CHEBI:30616"/>
        <dbReference type="ChEBI" id="CHEBI:33019"/>
        <dbReference type="ChEBI" id="CHEBI:57472"/>
        <dbReference type="ChEBI" id="CHEBI:57743"/>
        <dbReference type="ChEBI" id="CHEBI:456215"/>
        <dbReference type="EC" id="6.3.4.5"/>
    </reaction>
</comment>
<comment type="pathway">
    <text evidence="1">Amino-acid biosynthesis; L-arginine biosynthesis; L-arginine from L-ornithine and carbamoyl phosphate: step 2/3.</text>
</comment>
<comment type="subunit">
    <text evidence="1">Homotetramer.</text>
</comment>
<comment type="subcellular location">
    <subcellularLocation>
        <location evidence="1">Cytoplasm</location>
    </subcellularLocation>
</comment>
<comment type="similarity">
    <text evidence="1">Belongs to the argininosuccinate synthase family. Type 1 subfamily.</text>
</comment>
<organism>
    <name type="scientific">Clostridium kluyveri (strain ATCC 8527 / DSM 555 / NBRC 12016 / NCIMB 10680 / K1)</name>
    <dbReference type="NCBI Taxonomy" id="431943"/>
    <lineage>
        <taxon>Bacteria</taxon>
        <taxon>Bacillati</taxon>
        <taxon>Bacillota</taxon>
        <taxon>Clostridia</taxon>
        <taxon>Eubacteriales</taxon>
        <taxon>Clostridiaceae</taxon>
        <taxon>Clostridium</taxon>
    </lineage>
</organism>
<name>ASSY_CLOK5</name>
<evidence type="ECO:0000255" key="1">
    <source>
        <dbReference type="HAMAP-Rule" id="MF_00005"/>
    </source>
</evidence>
<reference key="1">
    <citation type="journal article" date="2008" name="Proc. Natl. Acad. Sci. U.S.A.">
        <title>The genome of Clostridium kluyveri, a strict anaerobe with unique metabolic features.</title>
        <authorList>
            <person name="Seedorf H."/>
            <person name="Fricke W.F."/>
            <person name="Veith B."/>
            <person name="Brueggemann H."/>
            <person name="Liesegang H."/>
            <person name="Strittmatter A."/>
            <person name="Miethke M."/>
            <person name="Buckel W."/>
            <person name="Hinderberger J."/>
            <person name="Li F."/>
            <person name="Hagemeier C."/>
            <person name="Thauer R.K."/>
            <person name="Gottschalk G."/>
        </authorList>
    </citation>
    <scope>NUCLEOTIDE SEQUENCE [LARGE SCALE GENOMIC DNA]</scope>
    <source>
        <strain>ATCC 8527 / DSM 555 / NBRC 12016 / NCIMB 10680 / K1</strain>
    </source>
</reference>
<accession>A5N6U2</accession>
<gene>
    <name evidence="1" type="primary">argG</name>
    <name type="ordered locus">CKL_0981</name>
</gene>
<protein>
    <recommendedName>
        <fullName evidence="1">Argininosuccinate synthase</fullName>
        <ecNumber evidence="1">6.3.4.5</ecNumber>
    </recommendedName>
    <alternativeName>
        <fullName evidence="1">Citrulline--aspartate ligase</fullName>
    </alternativeName>
</protein>
<dbReference type="EC" id="6.3.4.5" evidence="1"/>
<dbReference type="EMBL" id="CP000673">
    <property type="protein sequence ID" value="EDK33023.1"/>
    <property type="molecule type" value="Genomic_DNA"/>
</dbReference>
<dbReference type="RefSeq" id="WP_012101353.1">
    <property type="nucleotide sequence ID" value="NC_009706.1"/>
</dbReference>
<dbReference type="SMR" id="A5N6U2"/>
<dbReference type="STRING" id="431943.CKL_0981"/>
<dbReference type="KEGG" id="ckl:CKL_0981"/>
<dbReference type="eggNOG" id="COG0137">
    <property type="taxonomic scope" value="Bacteria"/>
</dbReference>
<dbReference type="HOGENOM" id="CLU_032784_4_2_9"/>
<dbReference type="UniPathway" id="UPA00068">
    <property type="reaction ID" value="UER00113"/>
</dbReference>
<dbReference type="Proteomes" id="UP000002411">
    <property type="component" value="Chromosome"/>
</dbReference>
<dbReference type="GO" id="GO:0005737">
    <property type="term" value="C:cytoplasm"/>
    <property type="evidence" value="ECO:0007669"/>
    <property type="project" value="UniProtKB-SubCell"/>
</dbReference>
<dbReference type="GO" id="GO:0004055">
    <property type="term" value="F:argininosuccinate synthase activity"/>
    <property type="evidence" value="ECO:0007669"/>
    <property type="project" value="UniProtKB-UniRule"/>
</dbReference>
<dbReference type="GO" id="GO:0005524">
    <property type="term" value="F:ATP binding"/>
    <property type="evidence" value="ECO:0007669"/>
    <property type="project" value="UniProtKB-UniRule"/>
</dbReference>
<dbReference type="GO" id="GO:0000053">
    <property type="term" value="P:argininosuccinate metabolic process"/>
    <property type="evidence" value="ECO:0007669"/>
    <property type="project" value="TreeGrafter"/>
</dbReference>
<dbReference type="GO" id="GO:0006526">
    <property type="term" value="P:L-arginine biosynthetic process"/>
    <property type="evidence" value="ECO:0007669"/>
    <property type="project" value="UniProtKB-UniRule"/>
</dbReference>
<dbReference type="GO" id="GO:0000050">
    <property type="term" value="P:urea cycle"/>
    <property type="evidence" value="ECO:0007669"/>
    <property type="project" value="TreeGrafter"/>
</dbReference>
<dbReference type="CDD" id="cd01999">
    <property type="entry name" value="ASS"/>
    <property type="match status" value="1"/>
</dbReference>
<dbReference type="FunFam" id="3.40.50.620:FF:000019">
    <property type="entry name" value="Argininosuccinate synthase"/>
    <property type="match status" value="1"/>
</dbReference>
<dbReference type="FunFam" id="3.90.1260.10:FF:000007">
    <property type="entry name" value="Argininosuccinate synthase"/>
    <property type="match status" value="1"/>
</dbReference>
<dbReference type="Gene3D" id="3.90.1260.10">
    <property type="entry name" value="Argininosuccinate synthetase, chain A, domain 2"/>
    <property type="match status" value="1"/>
</dbReference>
<dbReference type="Gene3D" id="3.40.50.620">
    <property type="entry name" value="HUPs"/>
    <property type="match status" value="1"/>
</dbReference>
<dbReference type="Gene3D" id="1.20.5.470">
    <property type="entry name" value="Single helix bin"/>
    <property type="match status" value="1"/>
</dbReference>
<dbReference type="HAMAP" id="MF_00005">
    <property type="entry name" value="Arg_succ_synth_type1"/>
    <property type="match status" value="1"/>
</dbReference>
<dbReference type="InterPro" id="IPR048268">
    <property type="entry name" value="Arginosuc_syn_C"/>
</dbReference>
<dbReference type="InterPro" id="IPR048267">
    <property type="entry name" value="Arginosuc_syn_N"/>
</dbReference>
<dbReference type="InterPro" id="IPR001518">
    <property type="entry name" value="Arginosuc_synth"/>
</dbReference>
<dbReference type="InterPro" id="IPR018223">
    <property type="entry name" value="Arginosuc_synth_CS"/>
</dbReference>
<dbReference type="InterPro" id="IPR023434">
    <property type="entry name" value="Arginosuc_synth_type_1_subfam"/>
</dbReference>
<dbReference type="InterPro" id="IPR024074">
    <property type="entry name" value="AS_cat/multimer_dom_body"/>
</dbReference>
<dbReference type="InterPro" id="IPR014729">
    <property type="entry name" value="Rossmann-like_a/b/a_fold"/>
</dbReference>
<dbReference type="NCBIfam" id="TIGR00032">
    <property type="entry name" value="argG"/>
    <property type="match status" value="1"/>
</dbReference>
<dbReference type="NCBIfam" id="NF001770">
    <property type="entry name" value="PRK00509.1"/>
    <property type="match status" value="1"/>
</dbReference>
<dbReference type="PANTHER" id="PTHR11587">
    <property type="entry name" value="ARGININOSUCCINATE SYNTHASE"/>
    <property type="match status" value="1"/>
</dbReference>
<dbReference type="PANTHER" id="PTHR11587:SF2">
    <property type="entry name" value="ARGININOSUCCINATE SYNTHASE"/>
    <property type="match status" value="1"/>
</dbReference>
<dbReference type="Pfam" id="PF20979">
    <property type="entry name" value="Arginosuc_syn_C"/>
    <property type="match status" value="1"/>
</dbReference>
<dbReference type="Pfam" id="PF00764">
    <property type="entry name" value="Arginosuc_synth"/>
    <property type="match status" value="1"/>
</dbReference>
<dbReference type="SUPFAM" id="SSF52402">
    <property type="entry name" value="Adenine nucleotide alpha hydrolases-like"/>
    <property type="match status" value="1"/>
</dbReference>
<dbReference type="SUPFAM" id="SSF69864">
    <property type="entry name" value="Argininosuccinate synthetase, C-terminal domain"/>
    <property type="match status" value="1"/>
</dbReference>
<dbReference type="PROSITE" id="PS00564">
    <property type="entry name" value="ARGININOSUCCIN_SYN_1"/>
    <property type="match status" value="1"/>
</dbReference>
<dbReference type="PROSITE" id="PS00565">
    <property type="entry name" value="ARGININOSUCCIN_SYN_2"/>
    <property type="match status" value="1"/>
</dbReference>
<keyword id="KW-0028">Amino-acid biosynthesis</keyword>
<keyword id="KW-0055">Arginine biosynthesis</keyword>
<keyword id="KW-0067">ATP-binding</keyword>
<keyword id="KW-0963">Cytoplasm</keyword>
<keyword id="KW-0436">Ligase</keyword>
<keyword id="KW-0547">Nucleotide-binding</keyword>
<keyword id="KW-1185">Reference proteome</keyword>
<proteinExistence type="inferred from homology"/>
<feature type="chain" id="PRO_1000073817" description="Argininosuccinate synthase">
    <location>
        <begin position="1"/>
        <end position="401"/>
    </location>
</feature>
<feature type="binding site" evidence="1">
    <location>
        <begin position="8"/>
        <end position="16"/>
    </location>
    <ligand>
        <name>ATP</name>
        <dbReference type="ChEBI" id="CHEBI:30616"/>
    </ligand>
</feature>
<feature type="binding site" evidence="1">
    <location>
        <position position="86"/>
    </location>
    <ligand>
        <name>L-citrulline</name>
        <dbReference type="ChEBI" id="CHEBI:57743"/>
    </ligand>
</feature>
<feature type="binding site" evidence="1">
    <location>
        <position position="91"/>
    </location>
    <ligand>
        <name>L-citrulline</name>
        <dbReference type="ChEBI" id="CHEBI:57743"/>
    </ligand>
</feature>
<feature type="binding site" evidence="1">
    <location>
        <position position="116"/>
    </location>
    <ligand>
        <name>ATP</name>
        <dbReference type="ChEBI" id="CHEBI:30616"/>
    </ligand>
</feature>
<feature type="binding site" evidence="1">
    <location>
        <position position="118"/>
    </location>
    <ligand>
        <name>L-aspartate</name>
        <dbReference type="ChEBI" id="CHEBI:29991"/>
    </ligand>
</feature>
<feature type="binding site" evidence="1">
    <location>
        <position position="122"/>
    </location>
    <ligand>
        <name>L-aspartate</name>
        <dbReference type="ChEBI" id="CHEBI:29991"/>
    </ligand>
</feature>
<feature type="binding site" evidence="1">
    <location>
        <position position="122"/>
    </location>
    <ligand>
        <name>L-citrulline</name>
        <dbReference type="ChEBI" id="CHEBI:57743"/>
    </ligand>
</feature>
<feature type="binding site" evidence="1">
    <location>
        <position position="123"/>
    </location>
    <ligand>
        <name>L-aspartate</name>
        <dbReference type="ChEBI" id="CHEBI:29991"/>
    </ligand>
</feature>
<feature type="binding site" evidence="1">
    <location>
        <position position="126"/>
    </location>
    <ligand>
        <name>L-citrulline</name>
        <dbReference type="ChEBI" id="CHEBI:57743"/>
    </ligand>
</feature>
<feature type="binding site" evidence="1">
    <location>
        <position position="175"/>
    </location>
    <ligand>
        <name>L-citrulline</name>
        <dbReference type="ChEBI" id="CHEBI:57743"/>
    </ligand>
</feature>
<feature type="binding site" evidence="1">
    <location>
        <position position="184"/>
    </location>
    <ligand>
        <name>L-citrulline</name>
        <dbReference type="ChEBI" id="CHEBI:57743"/>
    </ligand>
</feature>
<feature type="binding site" evidence="1">
    <location>
        <position position="260"/>
    </location>
    <ligand>
        <name>L-citrulline</name>
        <dbReference type="ChEBI" id="CHEBI:57743"/>
    </ligand>
</feature>
<feature type="binding site" evidence="1">
    <location>
        <position position="272"/>
    </location>
    <ligand>
        <name>L-citrulline</name>
        <dbReference type="ChEBI" id="CHEBI:57743"/>
    </ligand>
</feature>
<sequence length="401" mass="44802">MKDKVVLAYSGGLDTSIIIPWLKENYDLDVIAACIDVGQDDDMEAVRNKAIKTGAVKVYIEDVKEEFVRDYLFSAVKAHILYEDAYLLGTSLARPLMAKRLVEIAHAEGAKYIAHGCTGKGNDQVRFEVGVASFDPKLGIIAPWRIWDIKSREDAIDYANSKGVEVPVTKEKIYSNDKNIWHVSHEGGDLEDPKNEHKSSMYFMTTPPEKAKDEVSYVELYFEQGIPKKLDGKELPPVEMMQTLNKLGGENGIGIVDMVENRLVGMKSRGVYETPGGTILYAAHAALERLTIDKNTAHYKQMISQKYGELVYDGLWFSPLKEALDAFVEVTQKNVTGSVKLKLYKGNVMVAGVDAPYALYDEDISSFGASELYDHKDAEGFIKIFSLPYKIKAMIEKEKGN</sequence>